<gene>
    <name evidence="1" type="primary">rnz</name>
    <name type="ordered locus">lin2084</name>
</gene>
<sequence length="306" mass="33639">MELVFLGTGAGVPSRGRNVTSIALSMLNERNAIWLFDCGEATQHQVLRSHIKLSKLEKIFITHMHGDHIFGLPGLLSSRSFQGGDSDLTIYGPAGIAEYVETSLRLSGTRLTYKINFEEIEPGVIFEDEMFLVTADDLDHGVRSFGYRIVEKDKQGALNAEKLKADGVEAGPVFQKLKNGEIVTLADGRVIDGKNYIGEPQKGKIISIFGDTKETVSELELAMNADILVHEATFEGDKAKMAGEYMHSTTLQAANLAKAANVKKLILTHISSRYDRDASKELLIEAKTVFENTEIAYDLAVFQVGE</sequence>
<protein>
    <recommendedName>
        <fullName evidence="1">Ribonuclease Z</fullName>
        <shortName evidence="1">RNase Z</shortName>
        <ecNumber evidence="1">3.1.26.11</ecNumber>
    </recommendedName>
    <alternativeName>
        <fullName evidence="1">tRNA 3 endonuclease</fullName>
    </alternativeName>
    <alternativeName>
        <fullName evidence="1">tRNase Z</fullName>
    </alternativeName>
</protein>
<evidence type="ECO:0000255" key="1">
    <source>
        <dbReference type="HAMAP-Rule" id="MF_01818"/>
    </source>
</evidence>
<name>RNZ_LISIN</name>
<feature type="chain" id="PRO_0000155873" description="Ribonuclease Z">
    <location>
        <begin position="1"/>
        <end position="306"/>
    </location>
</feature>
<feature type="active site" description="Proton acceptor" evidence="1">
    <location>
        <position position="67"/>
    </location>
</feature>
<feature type="binding site" evidence="1">
    <location>
        <position position="63"/>
    </location>
    <ligand>
        <name>Zn(2+)</name>
        <dbReference type="ChEBI" id="CHEBI:29105"/>
        <label>1</label>
        <note>catalytic</note>
    </ligand>
</feature>
<feature type="binding site" evidence="1">
    <location>
        <position position="65"/>
    </location>
    <ligand>
        <name>Zn(2+)</name>
        <dbReference type="ChEBI" id="CHEBI:29105"/>
        <label>1</label>
        <note>catalytic</note>
    </ligand>
</feature>
<feature type="binding site" evidence="1">
    <location>
        <position position="67"/>
    </location>
    <ligand>
        <name>Zn(2+)</name>
        <dbReference type="ChEBI" id="CHEBI:29105"/>
        <label>2</label>
        <note>catalytic</note>
    </ligand>
</feature>
<feature type="binding site" evidence="1">
    <location>
        <position position="68"/>
    </location>
    <ligand>
        <name>Zn(2+)</name>
        <dbReference type="ChEBI" id="CHEBI:29105"/>
        <label>2</label>
        <note>catalytic</note>
    </ligand>
</feature>
<feature type="binding site" evidence="1">
    <location>
        <position position="140"/>
    </location>
    <ligand>
        <name>Zn(2+)</name>
        <dbReference type="ChEBI" id="CHEBI:29105"/>
        <label>1</label>
        <note>catalytic</note>
    </ligand>
</feature>
<feature type="binding site" evidence="1">
    <location>
        <position position="211"/>
    </location>
    <ligand>
        <name>Zn(2+)</name>
        <dbReference type="ChEBI" id="CHEBI:29105"/>
        <label>1</label>
        <note>catalytic</note>
    </ligand>
</feature>
<feature type="binding site" evidence="1">
    <location>
        <position position="211"/>
    </location>
    <ligand>
        <name>Zn(2+)</name>
        <dbReference type="ChEBI" id="CHEBI:29105"/>
        <label>2</label>
        <note>catalytic</note>
    </ligand>
</feature>
<feature type="binding site" evidence="1">
    <location>
        <position position="269"/>
    </location>
    <ligand>
        <name>Zn(2+)</name>
        <dbReference type="ChEBI" id="CHEBI:29105"/>
        <label>2</label>
        <note>catalytic</note>
    </ligand>
</feature>
<proteinExistence type="inferred from homology"/>
<keyword id="KW-0255">Endonuclease</keyword>
<keyword id="KW-0378">Hydrolase</keyword>
<keyword id="KW-0479">Metal-binding</keyword>
<keyword id="KW-0540">Nuclease</keyword>
<keyword id="KW-0819">tRNA processing</keyword>
<keyword id="KW-0862">Zinc</keyword>
<accession>Q92A38</accession>
<dbReference type="EC" id="3.1.26.11" evidence="1"/>
<dbReference type="EMBL" id="AL596170">
    <property type="protein sequence ID" value="CAC97314.1"/>
    <property type="molecule type" value="Genomic_DNA"/>
</dbReference>
<dbReference type="PIR" id="AB1693">
    <property type="entry name" value="AB1693"/>
</dbReference>
<dbReference type="RefSeq" id="WP_003769501.1">
    <property type="nucleotide sequence ID" value="NC_003212.1"/>
</dbReference>
<dbReference type="SMR" id="Q92A38"/>
<dbReference type="STRING" id="272626.gene:17566442"/>
<dbReference type="KEGG" id="lin:lin2084"/>
<dbReference type="eggNOG" id="COG1234">
    <property type="taxonomic scope" value="Bacteria"/>
</dbReference>
<dbReference type="HOGENOM" id="CLU_031317_2_0_9"/>
<dbReference type="OrthoDB" id="9800940at2"/>
<dbReference type="Proteomes" id="UP000002513">
    <property type="component" value="Chromosome"/>
</dbReference>
<dbReference type="GO" id="GO:0042781">
    <property type="term" value="F:3'-tRNA processing endoribonuclease activity"/>
    <property type="evidence" value="ECO:0007669"/>
    <property type="project" value="UniProtKB-UniRule"/>
</dbReference>
<dbReference type="GO" id="GO:0008270">
    <property type="term" value="F:zinc ion binding"/>
    <property type="evidence" value="ECO:0007669"/>
    <property type="project" value="UniProtKB-UniRule"/>
</dbReference>
<dbReference type="CDD" id="cd07717">
    <property type="entry name" value="RNaseZ_ZiPD-like_MBL-fold"/>
    <property type="match status" value="1"/>
</dbReference>
<dbReference type="FunFam" id="3.60.15.10:FF:000002">
    <property type="entry name" value="Ribonuclease Z"/>
    <property type="match status" value="1"/>
</dbReference>
<dbReference type="Gene3D" id="3.60.15.10">
    <property type="entry name" value="Ribonuclease Z/Hydroxyacylglutathione hydrolase-like"/>
    <property type="match status" value="1"/>
</dbReference>
<dbReference type="HAMAP" id="MF_01818">
    <property type="entry name" value="RNase_Z_BN"/>
    <property type="match status" value="1"/>
</dbReference>
<dbReference type="InterPro" id="IPR001279">
    <property type="entry name" value="Metallo-B-lactamas"/>
</dbReference>
<dbReference type="InterPro" id="IPR036866">
    <property type="entry name" value="RibonucZ/Hydroxyglut_hydro"/>
</dbReference>
<dbReference type="InterPro" id="IPR013471">
    <property type="entry name" value="RNase_Z/BN"/>
</dbReference>
<dbReference type="NCBIfam" id="NF000800">
    <property type="entry name" value="PRK00055.1-1"/>
    <property type="match status" value="1"/>
</dbReference>
<dbReference type="NCBIfam" id="NF000801">
    <property type="entry name" value="PRK00055.1-3"/>
    <property type="match status" value="1"/>
</dbReference>
<dbReference type="NCBIfam" id="TIGR02651">
    <property type="entry name" value="RNase_Z"/>
    <property type="match status" value="1"/>
</dbReference>
<dbReference type="PANTHER" id="PTHR46018">
    <property type="entry name" value="ZINC PHOSPHODIESTERASE ELAC PROTEIN 1"/>
    <property type="match status" value="1"/>
</dbReference>
<dbReference type="PANTHER" id="PTHR46018:SF2">
    <property type="entry name" value="ZINC PHOSPHODIESTERASE ELAC PROTEIN 1"/>
    <property type="match status" value="1"/>
</dbReference>
<dbReference type="Pfam" id="PF12706">
    <property type="entry name" value="Lactamase_B_2"/>
    <property type="match status" value="1"/>
</dbReference>
<dbReference type="SMART" id="SM00849">
    <property type="entry name" value="Lactamase_B"/>
    <property type="match status" value="1"/>
</dbReference>
<dbReference type="SUPFAM" id="SSF56281">
    <property type="entry name" value="Metallo-hydrolase/oxidoreductase"/>
    <property type="match status" value="1"/>
</dbReference>
<reference key="1">
    <citation type="journal article" date="2001" name="Science">
        <title>Comparative genomics of Listeria species.</title>
        <authorList>
            <person name="Glaser P."/>
            <person name="Frangeul L."/>
            <person name="Buchrieser C."/>
            <person name="Rusniok C."/>
            <person name="Amend A."/>
            <person name="Baquero F."/>
            <person name="Berche P."/>
            <person name="Bloecker H."/>
            <person name="Brandt P."/>
            <person name="Chakraborty T."/>
            <person name="Charbit A."/>
            <person name="Chetouani F."/>
            <person name="Couve E."/>
            <person name="de Daruvar A."/>
            <person name="Dehoux P."/>
            <person name="Domann E."/>
            <person name="Dominguez-Bernal G."/>
            <person name="Duchaud E."/>
            <person name="Durant L."/>
            <person name="Dussurget O."/>
            <person name="Entian K.-D."/>
            <person name="Fsihi H."/>
            <person name="Garcia-del Portillo F."/>
            <person name="Garrido P."/>
            <person name="Gautier L."/>
            <person name="Goebel W."/>
            <person name="Gomez-Lopez N."/>
            <person name="Hain T."/>
            <person name="Hauf J."/>
            <person name="Jackson D."/>
            <person name="Jones L.-M."/>
            <person name="Kaerst U."/>
            <person name="Kreft J."/>
            <person name="Kuhn M."/>
            <person name="Kunst F."/>
            <person name="Kurapkat G."/>
            <person name="Madueno E."/>
            <person name="Maitournam A."/>
            <person name="Mata Vicente J."/>
            <person name="Ng E."/>
            <person name="Nedjari H."/>
            <person name="Nordsiek G."/>
            <person name="Novella S."/>
            <person name="de Pablos B."/>
            <person name="Perez-Diaz J.-C."/>
            <person name="Purcell R."/>
            <person name="Remmel B."/>
            <person name="Rose M."/>
            <person name="Schlueter T."/>
            <person name="Simoes N."/>
            <person name="Tierrez A."/>
            <person name="Vazquez-Boland J.-A."/>
            <person name="Voss H."/>
            <person name="Wehland J."/>
            <person name="Cossart P."/>
        </authorList>
    </citation>
    <scope>NUCLEOTIDE SEQUENCE [LARGE SCALE GENOMIC DNA]</scope>
    <source>
        <strain>ATCC BAA-680 / CLIP 11262</strain>
    </source>
</reference>
<comment type="function">
    <text evidence="1">Zinc phosphodiesterase, which displays some tRNA 3'-processing endonuclease activity. Probably involved in tRNA maturation, by removing a 3'-trailer from precursor tRNA.</text>
</comment>
<comment type="catalytic activity">
    <reaction evidence="1">
        <text>Endonucleolytic cleavage of RNA, removing extra 3' nucleotides from tRNA precursor, generating 3' termini of tRNAs. A 3'-hydroxy group is left at the tRNA terminus and a 5'-phosphoryl group is left at the trailer molecule.</text>
        <dbReference type="EC" id="3.1.26.11"/>
    </reaction>
</comment>
<comment type="cofactor">
    <cofactor evidence="1">
        <name>Zn(2+)</name>
        <dbReference type="ChEBI" id="CHEBI:29105"/>
    </cofactor>
    <text evidence="1">Binds 2 Zn(2+) ions.</text>
</comment>
<comment type="subunit">
    <text evidence="1">Homodimer.</text>
</comment>
<comment type="similarity">
    <text evidence="1">Belongs to the RNase Z family.</text>
</comment>
<organism>
    <name type="scientific">Listeria innocua serovar 6a (strain ATCC BAA-680 / CLIP 11262)</name>
    <dbReference type="NCBI Taxonomy" id="272626"/>
    <lineage>
        <taxon>Bacteria</taxon>
        <taxon>Bacillati</taxon>
        <taxon>Bacillota</taxon>
        <taxon>Bacilli</taxon>
        <taxon>Bacillales</taxon>
        <taxon>Listeriaceae</taxon>
        <taxon>Listeria</taxon>
    </lineage>
</organism>